<organism>
    <name type="scientific">Xanthomonas euvesicatoria pv. vesicatoria (strain 85-10)</name>
    <name type="common">Xanthomonas campestris pv. vesicatoria</name>
    <dbReference type="NCBI Taxonomy" id="316273"/>
    <lineage>
        <taxon>Bacteria</taxon>
        <taxon>Pseudomonadati</taxon>
        <taxon>Pseudomonadota</taxon>
        <taxon>Gammaproteobacteria</taxon>
        <taxon>Lysobacterales</taxon>
        <taxon>Lysobacteraceae</taxon>
        <taxon>Xanthomonas</taxon>
    </lineage>
</organism>
<keyword id="KW-0963">Cytoplasm</keyword>
<keyword id="KW-0489">Methyltransferase</keyword>
<keyword id="KW-0698">rRNA processing</keyword>
<keyword id="KW-0949">S-adenosyl-L-methionine</keyword>
<keyword id="KW-0808">Transferase</keyword>
<sequence>MPSRSKSSQRWLKEHFADPYVKKAQAEGMRSRAAYKLEELLQRDRLLKPGMVVVDLGAAPGGWSQQVRKSMGDSGRVVALDILDMPALAGVEFLHGDFREQAVLSQFEAMLGDVPVDLVLSDMAPNKSGMDAVDQPRMMHLAELAMEFADTHLKPGGAFLIKLFQGVGSDDYIRELRRRYEKVTIRKPAASRKRSPEVYALGQGKRVQIK</sequence>
<comment type="function">
    <text evidence="1">Specifically methylates the uridine in position 2552 of 23S rRNA at the 2'-O position of the ribose in the fully assembled 50S ribosomal subunit.</text>
</comment>
<comment type="catalytic activity">
    <reaction evidence="1">
        <text>uridine(2552) in 23S rRNA + S-adenosyl-L-methionine = 2'-O-methyluridine(2552) in 23S rRNA + S-adenosyl-L-homocysteine + H(+)</text>
        <dbReference type="Rhea" id="RHEA:42720"/>
        <dbReference type="Rhea" id="RHEA-COMP:10202"/>
        <dbReference type="Rhea" id="RHEA-COMP:10203"/>
        <dbReference type="ChEBI" id="CHEBI:15378"/>
        <dbReference type="ChEBI" id="CHEBI:57856"/>
        <dbReference type="ChEBI" id="CHEBI:59789"/>
        <dbReference type="ChEBI" id="CHEBI:65315"/>
        <dbReference type="ChEBI" id="CHEBI:74478"/>
        <dbReference type="EC" id="2.1.1.166"/>
    </reaction>
</comment>
<comment type="subcellular location">
    <subcellularLocation>
        <location evidence="1">Cytoplasm</location>
    </subcellularLocation>
</comment>
<comment type="similarity">
    <text evidence="1">Belongs to the class I-like SAM-binding methyltransferase superfamily. RNA methyltransferase RlmE family.</text>
</comment>
<protein>
    <recommendedName>
        <fullName evidence="1">Ribosomal RNA large subunit methyltransferase E</fullName>
        <ecNumber evidence="1">2.1.1.166</ecNumber>
    </recommendedName>
    <alternativeName>
        <fullName evidence="1">23S rRNA Um2552 methyltransferase</fullName>
    </alternativeName>
    <alternativeName>
        <fullName evidence="1">rRNA (uridine-2'-O-)-methyltransferase</fullName>
    </alternativeName>
</protein>
<reference key="1">
    <citation type="journal article" date="2005" name="J. Bacteriol.">
        <title>Insights into genome plasticity and pathogenicity of the plant pathogenic Bacterium Xanthomonas campestris pv. vesicatoria revealed by the complete genome sequence.</title>
        <authorList>
            <person name="Thieme F."/>
            <person name="Koebnik R."/>
            <person name="Bekel T."/>
            <person name="Berger C."/>
            <person name="Boch J."/>
            <person name="Buettner D."/>
            <person name="Caldana C."/>
            <person name="Gaigalat L."/>
            <person name="Goesmann A."/>
            <person name="Kay S."/>
            <person name="Kirchner O."/>
            <person name="Lanz C."/>
            <person name="Linke B."/>
            <person name="McHardy A.C."/>
            <person name="Meyer F."/>
            <person name="Mittenhuber G."/>
            <person name="Nies D.H."/>
            <person name="Niesbach-Kloesgen U."/>
            <person name="Patschkowski T."/>
            <person name="Rueckert C."/>
            <person name="Rupp O."/>
            <person name="Schneiker S."/>
            <person name="Schuster S.C."/>
            <person name="Vorhoelter F.J."/>
            <person name="Weber E."/>
            <person name="Puehler A."/>
            <person name="Bonas U."/>
            <person name="Bartels D."/>
            <person name="Kaiser O."/>
        </authorList>
    </citation>
    <scope>NUCLEOTIDE SEQUENCE [LARGE SCALE GENOMIC DNA]</scope>
    <source>
        <strain>85-10</strain>
    </source>
</reference>
<dbReference type="EC" id="2.1.1.166" evidence="1"/>
<dbReference type="EMBL" id="AM039952">
    <property type="protein sequence ID" value="CAJ23441.1"/>
    <property type="molecule type" value="Genomic_DNA"/>
</dbReference>
<dbReference type="RefSeq" id="WP_005915021.1">
    <property type="nucleotide sequence ID" value="NZ_CP017190.1"/>
</dbReference>
<dbReference type="SMR" id="Q3BUR8"/>
<dbReference type="STRING" id="456327.BJD11_13725"/>
<dbReference type="GeneID" id="97510106"/>
<dbReference type="KEGG" id="xcv:XCV1764"/>
<dbReference type="eggNOG" id="COG0293">
    <property type="taxonomic scope" value="Bacteria"/>
</dbReference>
<dbReference type="HOGENOM" id="CLU_009422_4_0_6"/>
<dbReference type="Proteomes" id="UP000007069">
    <property type="component" value="Chromosome"/>
</dbReference>
<dbReference type="GO" id="GO:0005737">
    <property type="term" value="C:cytoplasm"/>
    <property type="evidence" value="ECO:0007669"/>
    <property type="project" value="UniProtKB-SubCell"/>
</dbReference>
<dbReference type="GO" id="GO:0008650">
    <property type="term" value="F:rRNA (uridine-2'-O-)-methyltransferase activity"/>
    <property type="evidence" value="ECO:0007669"/>
    <property type="project" value="UniProtKB-UniRule"/>
</dbReference>
<dbReference type="FunFam" id="3.40.50.150:FF:000005">
    <property type="entry name" value="Ribosomal RNA large subunit methyltransferase E"/>
    <property type="match status" value="1"/>
</dbReference>
<dbReference type="Gene3D" id="3.40.50.150">
    <property type="entry name" value="Vaccinia Virus protein VP39"/>
    <property type="match status" value="1"/>
</dbReference>
<dbReference type="HAMAP" id="MF_01547">
    <property type="entry name" value="RNA_methyltr_E"/>
    <property type="match status" value="1"/>
</dbReference>
<dbReference type="InterPro" id="IPR050082">
    <property type="entry name" value="RNA_methyltr_RlmE"/>
</dbReference>
<dbReference type="InterPro" id="IPR002877">
    <property type="entry name" value="RNA_MeTrfase_FtsJ_dom"/>
</dbReference>
<dbReference type="InterPro" id="IPR015507">
    <property type="entry name" value="rRNA-MeTfrase_E"/>
</dbReference>
<dbReference type="InterPro" id="IPR029063">
    <property type="entry name" value="SAM-dependent_MTases_sf"/>
</dbReference>
<dbReference type="NCBIfam" id="NF008390">
    <property type="entry name" value="PRK11188.1"/>
    <property type="match status" value="1"/>
</dbReference>
<dbReference type="PANTHER" id="PTHR10920">
    <property type="entry name" value="RIBOSOMAL RNA METHYLTRANSFERASE"/>
    <property type="match status" value="1"/>
</dbReference>
<dbReference type="PANTHER" id="PTHR10920:SF18">
    <property type="entry name" value="RRNA METHYLTRANSFERASE 2, MITOCHONDRIAL"/>
    <property type="match status" value="1"/>
</dbReference>
<dbReference type="Pfam" id="PF01728">
    <property type="entry name" value="FtsJ"/>
    <property type="match status" value="1"/>
</dbReference>
<dbReference type="PIRSF" id="PIRSF005461">
    <property type="entry name" value="23S_rRNA_mtase"/>
    <property type="match status" value="1"/>
</dbReference>
<dbReference type="SUPFAM" id="SSF53335">
    <property type="entry name" value="S-adenosyl-L-methionine-dependent methyltransferases"/>
    <property type="match status" value="1"/>
</dbReference>
<name>RLME_XANE5</name>
<feature type="chain" id="PRO_0000282812" description="Ribosomal RNA large subunit methyltransferase E">
    <location>
        <begin position="1"/>
        <end position="210"/>
    </location>
</feature>
<feature type="active site" description="Proton acceptor" evidence="1">
    <location>
        <position position="162"/>
    </location>
</feature>
<feature type="binding site" evidence="1">
    <location>
        <position position="61"/>
    </location>
    <ligand>
        <name>S-adenosyl-L-methionine</name>
        <dbReference type="ChEBI" id="CHEBI:59789"/>
    </ligand>
</feature>
<feature type="binding site" evidence="1">
    <location>
        <position position="63"/>
    </location>
    <ligand>
        <name>S-adenosyl-L-methionine</name>
        <dbReference type="ChEBI" id="CHEBI:59789"/>
    </ligand>
</feature>
<feature type="binding site" evidence="1">
    <location>
        <position position="81"/>
    </location>
    <ligand>
        <name>S-adenosyl-L-methionine</name>
        <dbReference type="ChEBI" id="CHEBI:59789"/>
    </ligand>
</feature>
<feature type="binding site" evidence="1">
    <location>
        <position position="97"/>
    </location>
    <ligand>
        <name>S-adenosyl-L-methionine</name>
        <dbReference type="ChEBI" id="CHEBI:59789"/>
    </ligand>
</feature>
<feature type="binding site" evidence="1">
    <location>
        <position position="122"/>
    </location>
    <ligand>
        <name>S-adenosyl-L-methionine</name>
        <dbReference type="ChEBI" id="CHEBI:59789"/>
    </ligand>
</feature>
<evidence type="ECO:0000255" key="1">
    <source>
        <dbReference type="HAMAP-Rule" id="MF_01547"/>
    </source>
</evidence>
<accession>Q3BUR8</accession>
<proteinExistence type="inferred from homology"/>
<gene>
    <name evidence="1" type="primary">rlmE</name>
    <name evidence="1" type="synonym">ftsJ</name>
    <name evidence="1" type="synonym">rrmJ</name>
    <name type="ordered locus">XCV1764</name>
</gene>